<accession>Q58Y74</accession>
<accession>Q58Y73</accession>
<evidence type="ECO:0000255" key="1"/>
<evidence type="ECO:0000256" key="2">
    <source>
        <dbReference type="SAM" id="MobiDB-lite"/>
    </source>
</evidence>
<evidence type="ECO:0000269" key="3">
    <source>
    </source>
</evidence>
<evidence type="ECO:0000303" key="4">
    <source>
    </source>
</evidence>
<evidence type="ECO:0000305" key="5"/>
<dbReference type="EMBL" id="AY701870">
    <property type="protein sequence ID" value="AAW23328.1"/>
    <property type="molecule type" value="mRNA"/>
</dbReference>
<dbReference type="EMBL" id="AY701871">
    <property type="protein sequence ID" value="AAW23329.1"/>
    <property type="molecule type" value="mRNA"/>
</dbReference>
<dbReference type="CCDS" id="CCDS23218.1">
    <molecule id="Q58Y74-1"/>
</dbReference>
<dbReference type="RefSeq" id="NP_001014420.2">
    <property type="nucleotide sequence ID" value="NM_001014398.2"/>
</dbReference>
<dbReference type="SMR" id="Q58Y74"/>
<dbReference type="STRING" id="10090.ENSMUSP00000091357"/>
<dbReference type="iPTMnet" id="Q58Y74"/>
<dbReference type="PhosphoSitePlus" id="Q58Y74"/>
<dbReference type="PaxDb" id="10090-ENSMUSP00000091357"/>
<dbReference type="DNASU" id="541610"/>
<dbReference type="GeneID" id="541610"/>
<dbReference type="KEGG" id="mmu:541610"/>
<dbReference type="UCSC" id="uc009pup.1">
    <molecule id="Q58Y74-2"/>
    <property type="organism name" value="mouse"/>
</dbReference>
<dbReference type="AGR" id="MGI:3576664"/>
<dbReference type="CTD" id="541610"/>
<dbReference type="MGI" id="MGI:3576664">
    <property type="gene designation" value="Trcg1"/>
</dbReference>
<dbReference type="eggNOG" id="KOG4208">
    <property type="taxonomic scope" value="Eukaryota"/>
</dbReference>
<dbReference type="InParanoid" id="Q58Y74"/>
<dbReference type="OrthoDB" id="10070537at2759"/>
<dbReference type="PhylomeDB" id="Q58Y74"/>
<dbReference type="BioGRID-ORCS" id="541610">
    <property type="hits" value="1 hit in 77 CRISPR screens"/>
</dbReference>
<dbReference type="PRO" id="PR:Q58Y74"/>
<dbReference type="Proteomes" id="UP000000589">
    <property type="component" value="Unplaced"/>
</dbReference>
<dbReference type="RNAct" id="Q58Y74">
    <property type="molecule type" value="protein"/>
</dbReference>
<proteinExistence type="evidence at transcript level"/>
<name>TRCG1_MOUSE</name>
<sequence>MDKQWFPAAGILLAALLVVSASTLTLLSTNEDPEQFPSAPGTSAQQSSRILLGILTDVTGGINSVEREPEALGRRAGGLSTEGAGGQESPSMPGPSGRVIPEPIPSALTTSASDMASQPVSSGADPIEEIMALGTLETITMSSPQPSPRHESEQKFDKVFRLCGTVPASETLEKNVASKPAWHLIKAPPPPIFSRSPHLLWCTPNSTVYIPVPAWRDGHSRPEASSSVPLAPSTSLGLPIFPWMPNILKATESLLPASPGRSGLDLTSQVGSRASENTVALDTGPVSRGTSVLLLPSATSPSQASSLHSPRPSSASPLSASPSPAALSFFPSPASILVLVSSVTTGASDSPKAPVSVIAPSTTDSFIKTSNLGPQIALQPSHPGLWLPTSPIHMPTLSLQHFSSPPSTAHSSGFTESSVHADPTLASTLPHPGQDMSLQDLSFSTGGRSHTTHSVTFRINSNRFTKAVWNLVPLERWLLNRLICYQLRFIYQEAFPNFRNVSTLLFRPGCPEVKASLIFGPPDPSSIEILWTLYRKVKSSRWSLGYLSLADHGLSSAGYSMTDLTQEIINISFTLMRPFLPQLLLPSSQSCILLEKQTIQLVTHEVSRFYKAELQSQPLLLFSNVKEWVSVYMEYKFKSPIPIRLQGLASHLAHHITDPTLQKSSIMANGEKADLVFYEMWLLILGHPFTKTLENKTSSECQELRGLLTRQLTSVLQPLKNFGQVVVEEFHQEPLTARVQTAFFGAVPAQAIIQDTVLQALGSLQETEGLQLEMLLPVLGTPSSRASRGPRGGAMLNLQRFTSLFVLVALCTAPPFINKQALYLS</sequence>
<gene>
    <name type="primary">Trcg1</name>
</gene>
<protein>
    <recommendedName>
        <fullName>Taste receptor cell protein 1</fullName>
        <shortName>Taste receptor protein 1</shortName>
    </recommendedName>
</protein>
<feature type="signal peptide" evidence="1">
    <location>
        <begin position="1"/>
        <end position="21"/>
    </location>
</feature>
<feature type="chain" id="PRO_0000309591" description="Taste receptor cell protein 1">
    <location>
        <begin position="22"/>
        <end position="825"/>
    </location>
</feature>
<feature type="region of interest" description="Disordered" evidence="2">
    <location>
        <begin position="66"/>
        <end position="97"/>
    </location>
</feature>
<feature type="region of interest" description="Disordered" evidence="2">
    <location>
        <begin position="299"/>
        <end position="322"/>
    </location>
</feature>
<feature type="compositionally biased region" description="Low complexity" evidence="2">
    <location>
        <begin position="302"/>
        <end position="322"/>
    </location>
</feature>
<feature type="splice variant" id="VSP_029241" description="In isoform 2." evidence="4">
    <location>
        <begin position="1"/>
        <end position="560"/>
    </location>
</feature>
<feature type="splice variant" id="VSP_029242" description="In isoform 2." evidence="4">
    <original>HQEPLTARVQTAFFGAVPAQAIIQDTVLQALGSLQETEG</original>
    <variation>QHPQLQSLKRPQGRGHAEPPALHFSLCPGGSLYGSSLHQ</variation>
    <location>
        <begin position="731"/>
        <end position="769"/>
    </location>
</feature>
<feature type="splice variant" id="VSP_029243" description="In isoform 2." evidence="4">
    <location>
        <begin position="770"/>
        <end position="825"/>
    </location>
</feature>
<feature type="sequence conflict" description="In Ref. 1; AAW23329." evidence="5" ref="1">
    <original>S</original>
    <variation>P</variation>
    <location>
        <position position="590"/>
    </location>
</feature>
<feature type="sequence conflict" description="In Ref. 1; AAW23329." evidence="5" ref="1">
    <original>V</original>
    <variation>A</variation>
    <location>
        <position position="726"/>
    </location>
</feature>
<reference key="1">
    <citation type="journal article" date="2005" name="Genomics">
        <title>Two novel genes, Gpr113, which encodes a family 2 G-protein-coupled receptor, and Trcg1, are selectively expressed in taste receptor cells.</title>
        <authorList>
            <person name="LopezJimenez N.D."/>
            <person name="Sainz E.S."/>
            <person name="Cavenagh M.M."/>
            <person name="Cruz-Ithier M.A."/>
            <person name="Blackwood C.A."/>
            <person name="Battey J.F."/>
            <person name="Sullivan S.L."/>
        </authorList>
    </citation>
    <scope>NUCLEOTIDE SEQUENCE [MRNA] (ISOFORMS 1 AND 2)</scope>
    <scope>TISSUE SPECIFICITY</scope>
    <source>
        <strain>C57BL/6J</strain>
    </source>
</reference>
<organism>
    <name type="scientific">Mus musculus</name>
    <name type="common">Mouse</name>
    <dbReference type="NCBI Taxonomy" id="10090"/>
    <lineage>
        <taxon>Eukaryota</taxon>
        <taxon>Metazoa</taxon>
        <taxon>Chordata</taxon>
        <taxon>Craniata</taxon>
        <taxon>Vertebrata</taxon>
        <taxon>Euteleostomi</taxon>
        <taxon>Mammalia</taxon>
        <taxon>Eutheria</taxon>
        <taxon>Euarchontoglires</taxon>
        <taxon>Glires</taxon>
        <taxon>Rodentia</taxon>
        <taxon>Myomorpha</taxon>
        <taxon>Muroidea</taxon>
        <taxon>Muridae</taxon>
        <taxon>Murinae</taxon>
        <taxon>Mus</taxon>
        <taxon>Mus</taxon>
    </lineage>
</organism>
<comment type="alternative products">
    <event type="alternative splicing"/>
    <isoform>
        <id>Q58Y74-1</id>
        <name>1</name>
        <sequence type="displayed"/>
    </isoform>
    <isoform>
        <id>Q58Y74-2</id>
        <name>2</name>
        <sequence type="described" ref="VSP_029241 VSP_029242 VSP_029243"/>
    </isoform>
</comment>
<comment type="tissue specificity">
    <text evidence="3">Expression is restricted to circumvallate papillae.</text>
</comment>
<keyword id="KW-0025">Alternative splicing</keyword>
<keyword id="KW-1185">Reference proteome</keyword>
<keyword id="KW-0732">Signal</keyword>